<feature type="chain" id="PRO_0000089645" description="Chromosome transmission fidelity protein 18">
    <location>
        <begin position="1"/>
        <end position="741"/>
    </location>
</feature>
<feature type="binding site" evidence="1">
    <location>
        <begin position="183"/>
        <end position="190"/>
    </location>
    <ligand>
        <name>ATP</name>
        <dbReference type="ChEBI" id="CHEBI:30616"/>
    </ligand>
</feature>
<feature type="mutagenesis site" description="Fails to unload PCNA." evidence="6">
    <original>K</original>
    <variation>E</variation>
    <location>
        <position position="189"/>
    </location>
</feature>
<feature type="helix" evidence="9">
    <location>
        <begin position="389"/>
        <end position="394"/>
    </location>
</feature>
<feature type="helix" evidence="9">
    <location>
        <begin position="399"/>
        <end position="406"/>
    </location>
</feature>
<feature type="helix" evidence="9">
    <location>
        <begin position="415"/>
        <end position="429"/>
    </location>
</feature>
<feature type="helix" evidence="9">
    <location>
        <begin position="432"/>
        <end position="442"/>
    </location>
</feature>
<feature type="turn" evidence="9">
    <location>
        <begin position="443"/>
        <end position="445"/>
    </location>
</feature>
<feature type="strand" evidence="9">
    <location>
        <begin position="451"/>
        <end position="453"/>
    </location>
</feature>
<feature type="helix" evidence="9">
    <location>
        <begin position="454"/>
        <end position="475"/>
    </location>
</feature>
<feature type="helix" evidence="9">
    <location>
        <begin position="478"/>
        <end position="480"/>
    </location>
</feature>
<feature type="helix" evidence="9">
    <location>
        <begin position="481"/>
        <end position="484"/>
    </location>
</feature>
<feature type="helix" evidence="9">
    <location>
        <begin position="486"/>
        <end position="495"/>
    </location>
</feature>
<feature type="helix" evidence="9">
    <location>
        <begin position="509"/>
        <end position="533"/>
    </location>
</feature>
<feature type="helix" evidence="9">
    <location>
        <begin position="538"/>
        <end position="541"/>
    </location>
</feature>
<feature type="helix" evidence="9">
    <location>
        <begin position="544"/>
        <end position="549"/>
    </location>
</feature>
<feature type="helix" evidence="9">
    <location>
        <begin position="551"/>
        <end position="560"/>
    </location>
</feature>
<feature type="helix" evidence="9">
    <location>
        <begin position="563"/>
        <end position="565"/>
    </location>
</feature>
<feature type="helix" evidence="9">
    <location>
        <begin position="569"/>
        <end position="585"/>
    </location>
</feature>
<feature type="strand" evidence="9">
    <location>
        <begin position="589"/>
        <end position="592"/>
    </location>
</feature>
<feature type="strand" evidence="9">
    <location>
        <begin position="604"/>
        <end position="608"/>
    </location>
</feature>
<feature type="helix" evidence="9">
    <location>
        <begin position="611"/>
        <end position="614"/>
    </location>
</feature>
<feature type="helix" evidence="9">
    <location>
        <begin position="618"/>
        <end position="642"/>
    </location>
</feature>
<feature type="strand" evidence="8">
    <location>
        <begin position="719"/>
        <end position="722"/>
    </location>
</feature>
<feature type="helix" evidence="8">
    <location>
        <begin position="736"/>
        <end position="739"/>
    </location>
</feature>
<protein>
    <recommendedName>
        <fullName>Chromosome transmission fidelity protein 18</fullName>
    </recommendedName>
</protein>
<accession>P49956</accession>
<accession>D6VZQ2</accession>
<comment type="function">
    <text evidence="2 3 4 6">Essential for the fidelity of chromosome transmission. Required for the DNA replication block checkpoint. Component of the RFC-like complex CTF18-RFC which is required for efficient establishment of chromosome cohesion during S-phase and may load or unload POL30/PCNA. During a clamp loading circle, the RFC:clamp complex binds to DNA and the recognition of the double-stranded/single-stranded junction stimulates ATP hydrolysis by RFC. The complex presumably provides bipartite ATP sites in which one subunit supplies a catalytic site for hydrolysis of ATP bound to the neighboring subunit. Dissociation of RFC from the clamp leaves the clamp encircling DNA.</text>
</comment>
<comment type="subunit">
    <text evidence="2 3 4 5 6">Component of the CTF18-RFC complex, which consists of CTF18, CTF8, DCC1, RFC2, RFC3, RFC4 and RFC5. CTF18 interacts with ECO1.</text>
</comment>
<comment type="interaction">
    <interactant intactId="EBI-4560">
        <id>P49956</id>
    </interactant>
    <interactant intactId="EBI-5216">
        <id>P38877</id>
        <label>CTF8</label>
    </interactant>
    <organismsDiffer>false</organismsDiffer>
    <experiments>5</experiments>
</comment>
<comment type="interaction">
    <interactant intactId="EBI-4560">
        <id>P49956</id>
    </interactant>
    <interactant intactId="EBI-22988">
        <id>P43605</id>
        <label>ECO1</label>
    </interactant>
    <organismsDiffer>false</organismsDiffer>
    <experiments>2</experiments>
</comment>
<comment type="interaction">
    <interactant intactId="EBI-4560">
        <id>P49956</id>
    </interactant>
    <interactant intactId="EBI-14992">
        <id>P40348</id>
        <label>RFC2</label>
    </interactant>
    <organismsDiffer>false</organismsDiffer>
    <experiments>3</experiments>
</comment>
<comment type="interaction">
    <interactant intactId="EBI-4560">
        <id>P49956</id>
    </interactant>
    <interactant intactId="EBI-15000">
        <id>P38629</id>
        <label>RFC3</label>
    </interactant>
    <organismsDiffer>false</organismsDiffer>
    <experiments>4</experiments>
</comment>
<comment type="interaction">
    <interactant intactId="EBI-4560">
        <id>P49956</id>
    </interactant>
    <interactant intactId="EBI-15009">
        <id>P40339</id>
        <label>RFC4</label>
    </interactant>
    <organismsDiffer>false</organismsDiffer>
    <experiments>6</experiments>
</comment>
<comment type="interaction">
    <interactant intactId="EBI-4560">
        <id>P49956</id>
    </interactant>
    <interactant intactId="EBI-15016">
        <id>P38251</id>
        <label>RFC5</label>
    </interactant>
    <organismsDiffer>false</organismsDiffer>
    <experiments>5</experiments>
</comment>
<comment type="subcellular location">
    <subcellularLocation>
        <location evidence="7">Nucleus</location>
    </subcellularLocation>
</comment>
<comment type="similarity">
    <text evidence="7">Belongs to the activator 1 small subunits family. CTF18 subfamily.</text>
</comment>
<gene>
    <name type="primary">CTF18</name>
    <name type="synonym">CHL12</name>
    <name type="ordered locus">YMR078C</name>
    <name type="ORF">YM9582.03C</name>
</gene>
<dbReference type="EMBL" id="L24514">
    <property type="status" value="NOT_ANNOTATED_CDS"/>
    <property type="molecule type" value="Genomic_DNA"/>
</dbReference>
<dbReference type="EMBL" id="Z49259">
    <property type="protein sequence ID" value="CAA89224.1"/>
    <property type="molecule type" value="Genomic_DNA"/>
</dbReference>
<dbReference type="EMBL" id="BK006946">
    <property type="protein sequence ID" value="DAA09976.1"/>
    <property type="molecule type" value="Genomic_DNA"/>
</dbReference>
<dbReference type="PIR" id="S50340">
    <property type="entry name" value="S50340"/>
</dbReference>
<dbReference type="RefSeq" id="NP_013795.1">
    <property type="nucleotide sequence ID" value="NM_001182577.1"/>
</dbReference>
<dbReference type="PDB" id="5MSM">
    <property type="method" value="X-ray"/>
    <property type="resolution" value="2.29 A"/>
    <property type="chains" value="C/F=666-741"/>
</dbReference>
<dbReference type="PDB" id="5OKC">
    <property type="method" value="X-ray"/>
    <property type="resolution" value="2.30 A"/>
    <property type="chains" value="G/I=715-741"/>
</dbReference>
<dbReference type="PDB" id="5OKI">
    <property type="method" value="X-ray"/>
    <property type="resolution" value="4.50 A"/>
    <property type="chains" value="E/I=715-740"/>
</dbReference>
<dbReference type="PDB" id="6S1C">
    <property type="method" value="X-ray"/>
    <property type="resolution" value="6.10 A"/>
    <property type="chains" value="D/H=713-741"/>
</dbReference>
<dbReference type="PDB" id="6S2E">
    <property type="method" value="EM"/>
    <property type="resolution" value="4.20 A"/>
    <property type="chains" value="E=713-741"/>
</dbReference>
<dbReference type="PDB" id="6S2F">
    <property type="method" value="EM"/>
    <property type="resolution" value="5.80 A"/>
    <property type="chains" value="E=713-741"/>
</dbReference>
<dbReference type="PDB" id="8TW7">
    <property type="method" value="EM"/>
    <property type="resolution" value="3.80 A"/>
    <property type="chains" value="1=386-643"/>
</dbReference>
<dbReference type="PDB" id="8TW8">
    <property type="method" value="EM"/>
    <property type="resolution" value="3.50 A"/>
    <property type="chains" value="1=386-643"/>
</dbReference>
<dbReference type="PDB" id="8TW9">
    <property type="method" value="EM"/>
    <property type="resolution" value="3.60 A"/>
    <property type="chains" value="C=715-740"/>
</dbReference>
<dbReference type="PDB" id="8TWB">
    <property type="method" value="EM"/>
    <property type="resolution" value="3.20 A"/>
    <property type="chains" value="1=386-643"/>
</dbReference>
<dbReference type="PDBsum" id="5MSM"/>
<dbReference type="PDBsum" id="5OKC"/>
<dbReference type="PDBsum" id="5OKI"/>
<dbReference type="PDBsum" id="6S1C"/>
<dbReference type="PDBsum" id="6S2E"/>
<dbReference type="PDBsum" id="6S2F"/>
<dbReference type="PDBsum" id="8TW7"/>
<dbReference type="PDBsum" id="8TW8"/>
<dbReference type="PDBsum" id="8TW9"/>
<dbReference type="PDBsum" id="8TWB"/>
<dbReference type="EMDB" id="EMD-10088"/>
<dbReference type="EMDB" id="EMD-10089"/>
<dbReference type="EMDB" id="EMD-41661"/>
<dbReference type="EMDB" id="EMD-41662"/>
<dbReference type="EMDB" id="EMD-41663"/>
<dbReference type="EMDB" id="EMD-41664"/>
<dbReference type="EMDB" id="EMD-41665"/>
<dbReference type="SMR" id="P49956"/>
<dbReference type="BioGRID" id="35254">
    <property type="interactions" value="548"/>
</dbReference>
<dbReference type="ComplexPortal" id="CPX-1731">
    <property type="entry name" value="CTF18-RFC complex"/>
</dbReference>
<dbReference type="DIP" id="DIP-5868N"/>
<dbReference type="FunCoup" id="P49956">
    <property type="interactions" value="1047"/>
</dbReference>
<dbReference type="IntAct" id="P49956">
    <property type="interactions" value="18"/>
</dbReference>
<dbReference type="MINT" id="P49956"/>
<dbReference type="STRING" id="4932.YMR078C"/>
<dbReference type="iPTMnet" id="P49956"/>
<dbReference type="PaxDb" id="4932-YMR078C"/>
<dbReference type="PeptideAtlas" id="P49956"/>
<dbReference type="EnsemblFungi" id="YMR078C_mRNA">
    <property type="protein sequence ID" value="YMR078C"/>
    <property type="gene ID" value="YMR078C"/>
</dbReference>
<dbReference type="GeneID" id="855102"/>
<dbReference type="KEGG" id="sce:YMR078C"/>
<dbReference type="AGR" id="SGD:S000004683"/>
<dbReference type="SGD" id="S000004683">
    <property type="gene designation" value="CTF18"/>
</dbReference>
<dbReference type="VEuPathDB" id="FungiDB:YMR078C"/>
<dbReference type="eggNOG" id="KOG1969">
    <property type="taxonomic scope" value="Eukaryota"/>
</dbReference>
<dbReference type="GeneTree" id="ENSGT00550000075029"/>
<dbReference type="HOGENOM" id="CLU_004894_3_1_1"/>
<dbReference type="InParanoid" id="P49956"/>
<dbReference type="OMA" id="RWLKGWE"/>
<dbReference type="OrthoDB" id="2195431at2759"/>
<dbReference type="BioCyc" id="YEAST:G3O-32780-MONOMER"/>
<dbReference type="BioGRID-ORCS" id="855102">
    <property type="hits" value="0 hits in 10 CRISPR screens"/>
</dbReference>
<dbReference type="PRO" id="PR:P49956"/>
<dbReference type="Proteomes" id="UP000002311">
    <property type="component" value="Chromosome XIII"/>
</dbReference>
<dbReference type="RNAct" id="P49956">
    <property type="molecule type" value="protein"/>
</dbReference>
<dbReference type="GO" id="GO:0031390">
    <property type="term" value="C:Ctf18 RFC-like complex"/>
    <property type="evidence" value="ECO:0000353"/>
    <property type="project" value="ComplexPortal"/>
</dbReference>
<dbReference type="GO" id="GO:0005739">
    <property type="term" value="C:mitochondrion"/>
    <property type="evidence" value="ECO:0007005"/>
    <property type="project" value="SGD"/>
</dbReference>
<dbReference type="GO" id="GO:0043596">
    <property type="term" value="C:nuclear replication fork"/>
    <property type="evidence" value="ECO:0000314"/>
    <property type="project" value="SGD"/>
</dbReference>
<dbReference type="GO" id="GO:0005634">
    <property type="term" value="C:nucleus"/>
    <property type="evidence" value="ECO:0000318"/>
    <property type="project" value="GO_Central"/>
</dbReference>
<dbReference type="GO" id="GO:0005524">
    <property type="term" value="F:ATP binding"/>
    <property type="evidence" value="ECO:0007669"/>
    <property type="project" value="UniProtKB-KW"/>
</dbReference>
<dbReference type="GO" id="GO:0016887">
    <property type="term" value="F:ATP hydrolysis activity"/>
    <property type="evidence" value="ECO:0007669"/>
    <property type="project" value="InterPro"/>
</dbReference>
<dbReference type="GO" id="GO:0003677">
    <property type="term" value="F:DNA binding"/>
    <property type="evidence" value="ECO:0000318"/>
    <property type="project" value="GO_Central"/>
</dbReference>
<dbReference type="GO" id="GO:0006270">
    <property type="term" value="P:DNA replication initiation"/>
    <property type="evidence" value="ECO:0000315"/>
    <property type="project" value="SGD"/>
</dbReference>
<dbReference type="GO" id="GO:0000724">
    <property type="term" value="P:double-strand break repair via homologous recombination"/>
    <property type="evidence" value="ECO:0000315"/>
    <property type="project" value="SGD"/>
</dbReference>
<dbReference type="GO" id="GO:0035753">
    <property type="term" value="P:maintenance of DNA trinucleotide repeats"/>
    <property type="evidence" value="ECO:0000315"/>
    <property type="project" value="SGD"/>
</dbReference>
<dbReference type="GO" id="GO:0007064">
    <property type="term" value="P:mitotic sister chromatid cohesion"/>
    <property type="evidence" value="ECO:0000315"/>
    <property type="project" value="SGD"/>
</dbReference>
<dbReference type="GO" id="GO:0034398">
    <property type="term" value="P:telomere tethering at nuclear periphery"/>
    <property type="evidence" value="ECO:0000315"/>
    <property type="project" value="SGD"/>
</dbReference>
<dbReference type="CDD" id="cd00009">
    <property type="entry name" value="AAA"/>
    <property type="match status" value="1"/>
</dbReference>
<dbReference type="CDD" id="cd18140">
    <property type="entry name" value="HLD_clamp_RFC"/>
    <property type="match status" value="1"/>
</dbReference>
<dbReference type="Gene3D" id="1.10.8.60">
    <property type="match status" value="1"/>
</dbReference>
<dbReference type="Gene3D" id="3.40.50.300">
    <property type="entry name" value="P-loop containing nucleotide triphosphate hydrolases"/>
    <property type="match status" value="1"/>
</dbReference>
<dbReference type="InterPro" id="IPR003593">
    <property type="entry name" value="AAA+_ATPase"/>
</dbReference>
<dbReference type="InterPro" id="IPR003959">
    <property type="entry name" value="ATPase_AAA_core"/>
</dbReference>
<dbReference type="InterPro" id="IPR027417">
    <property type="entry name" value="P-loop_NTPase"/>
</dbReference>
<dbReference type="InterPro" id="IPR047854">
    <property type="entry name" value="RFC_lid"/>
</dbReference>
<dbReference type="PANTHER" id="PTHR23389">
    <property type="entry name" value="CHROMOSOME TRANSMISSION FIDELITY FACTOR 18"/>
    <property type="match status" value="1"/>
</dbReference>
<dbReference type="PANTHER" id="PTHR23389:SF3">
    <property type="entry name" value="CHROMOSOME TRANSMISSION FIDELITY PROTEIN 18 HOMOLOG"/>
    <property type="match status" value="1"/>
</dbReference>
<dbReference type="Pfam" id="PF00004">
    <property type="entry name" value="AAA"/>
    <property type="match status" value="1"/>
</dbReference>
<dbReference type="Pfam" id="PF25361">
    <property type="entry name" value="AAA_lid_RFC1"/>
    <property type="match status" value="1"/>
</dbReference>
<dbReference type="SMART" id="SM00382">
    <property type="entry name" value="AAA"/>
    <property type="match status" value="1"/>
</dbReference>
<dbReference type="SUPFAM" id="SSF52540">
    <property type="entry name" value="P-loop containing nucleoside triphosphate hydrolases"/>
    <property type="match status" value="1"/>
</dbReference>
<evidence type="ECO:0000255" key="1"/>
<evidence type="ECO:0000269" key="2">
    <source>
    </source>
</evidence>
<evidence type="ECO:0000269" key="3">
    <source>
    </source>
</evidence>
<evidence type="ECO:0000269" key="4">
    <source>
    </source>
</evidence>
<evidence type="ECO:0000269" key="5">
    <source>
    </source>
</evidence>
<evidence type="ECO:0000269" key="6">
    <source>
    </source>
</evidence>
<evidence type="ECO:0000305" key="7"/>
<evidence type="ECO:0007829" key="8">
    <source>
        <dbReference type="PDB" id="5MSM"/>
    </source>
</evidence>
<evidence type="ECO:0007829" key="9">
    <source>
        <dbReference type="PDB" id="8TWB"/>
    </source>
</evidence>
<organism>
    <name type="scientific">Saccharomyces cerevisiae (strain ATCC 204508 / S288c)</name>
    <name type="common">Baker's yeast</name>
    <dbReference type="NCBI Taxonomy" id="559292"/>
    <lineage>
        <taxon>Eukaryota</taxon>
        <taxon>Fungi</taxon>
        <taxon>Dikarya</taxon>
        <taxon>Ascomycota</taxon>
        <taxon>Saccharomycotina</taxon>
        <taxon>Saccharomycetes</taxon>
        <taxon>Saccharomycetales</taxon>
        <taxon>Saccharomycetaceae</taxon>
        <taxon>Saccharomyces</taxon>
    </lineage>
</organism>
<keyword id="KW-0002">3D-structure</keyword>
<keyword id="KW-0067">ATP-binding</keyword>
<keyword id="KW-0131">Cell cycle</keyword>
<keyword id="KW-0235">DNA replication</keyword>
<keyword id="KW-0238">DNA-binding</keyword>
<keyword id="KW-0547">Nucleotide-binding</keyword>
<keyword id="KW-0539">Nucleus</keyword>
<keyword id="KW-1185">Reference proteome</keyword>
<reference key="1">
    <citation type="journal article" date="1994" name="Genetics">
        <title>CHL12, a gene essential for the fidelity of chromosome transmission in the yeast Saccharomyces cerevisiae.</title>
        <authorList>
            <person name="Kouprina N."/>
            <person name="Kroll E."/>
            <person name="Kirillov A."/>
            <person name="Bannikov V."/>
            <person name="Zakharyev V."/>
            <person name="Larionov V."/>
        </authorList>
    </citation>
    <scope>NUCLEOTIDE SEQUENCE [GENOMIC DNA]</scope>
    <source>
        <strain>CL10</strain>
    </source>
</reference>
<reference key="2">
    <citation type="journal article" date="1997" name="Nature">
        <title>The nucleotide sequence of Saccharomyces cerevisiae chromosome XIII.</title>
        <authorList>
            <person name="Bowman S."/>
            <person name="Churcher C.M."/>
            <person name="Badcock K."/>
            <person name="Brown D."/>
            <person name="Chillingworth T."/>
            <person name="Connor R."/>
            <person name="Dedman K."/>
            <person name="Devlin K."/>
            <person name="Gentles S."/>
            <person name="Hamlin N."/>
            <person name="Hunt S."/>
            <person name="Jagels K."/>
            <person name="Lye G."/>
            <person name="Moule S."/>
            <person name="Odell C."/>
            <person name="Pearson D."/>
            <person name="Rajandream M.A."/>
            <person name="Rice P."/>
            <person name="Skelton J."/>
            <person name="Walsh S.V."/>
            <person name="Whitehead S."/>
            <person name="Barrell B.G."/>
        </authorList>
    </citation>
    <scope>NUCLEOTIDE SEQUENCE [LARGE SCALE GENOMIC DNA]</scope>
    <source>
        <strain>ATCC 204508 / S288c</strain>
    </source>
</reference>
<reference key="3">
    <citation type="journal article" date="2014" name="G3 (Bethesda)">
        <title>The reference genome sequence of Saccharomyces cerevisiae: Then and now.</title>
        <authorList>
            <person name="Engel S.R."/>
            <person name="Dietrich F.S."/>
            <person name="Fisk D.G."/>
            <person name="Binkley G."/>
            <person name="Balakrishnan R."/>
            <person name="Costanzo M.C."/>
            <person name="Dwight S.S."/>
            <person name="Hitz B.C."/>
            <person name="Karra K."/>
            <person name="Nash R.S."/>
            <person name="Weng S."/>
            <person name="Wong E.D."/>
            <person name="Lloyd P."/>
            <person name="Skrzypek M.S."/>
            <person name="Miyasato S.R."/>
            <person name="Simison M."/>
            <person name="Cherry J.M."/>
        </authorList>
    </citation>
    <scope>GENOME REANNOTATION</scope>
    <source>
        <strain>ATCC 204508 / S288c</strain>
    </source>
</reference>
<reference key="4">
    <citation type="journal article" date="2001" name="Mol. Cell">
        <title>Identification of RFC(Ctf18p, Ctf8p, Dcc1p): an alternative RFC complex required for sister chromatid cohesion in S. cerevisiae.</title>
        <authorList>
            <person name="Mayer M.L."/>
            <person name="Gygi S.P."/>
            <person name="Aebersold R."/>
            <person name="Hieter P."/>
        </authorList>
    </citation>
    <scope>FUNCTION</scope>
    <scope>IDENTIFICATION IN THE CTF18-RFC COMPLEX</scope>
</reference>
<reference key="5">
    <citation type="journal article" date="2001" name="Mol. Cell. Biol.">
        <title>Saccharomyces cerevisiae CTF18 and CTF4 are required for sister chromatid cohesion.</title>
        <authorList>
            <person name="Hanna J.S."/>
            <person name="Kroll E.S."/>
            <person name="Lundblad V."/>
            <person name="Spencer F.A."/>
        </authorList>
    </citation>
    <scope>FUNCTION</scope>
    <scope>SUBUNIT</scope>
</reference>
<reference key="6">
    <citation type="journal article" date="2001" name="Mol. Cell. Biol.">
        <title>Chl12 (Ctf18) forms a novel replication factor C-related complex and functions redundantly with Rad24 in the DNA replication checkpoint pathway.</title>
        <authorList>
            <person name="Naiki T."/>
            <person name="Kondo T."/>
            <person name="Nakada D."/>
            <person name="Matsumoto K."/>
            <person name="Sugimoto K."/>
        </authorList>
    </citation>
    <scope>FUNCTION</scope>
    <scope>INTERACTION WITH RFC2; RFC3; RFC4 AND RFC5</scope>
</reference>
<reference key="7">
    <citation type="journal article" date="2003" name="Mol. Cell. Biol.">
        <title>Mechanical link between cohesion establishment and DNA replication: Ctf7p/Eco1p, a cohesion establishment factor, associates with three different replication factor C complexes.</title>
        <authorList>
            <person name="Kenna M.A."/>
            <person name="Skibbens R.V."/>
        </authorList>
    </citation>
    <scope>INTERACTION WITH ECO1</scope>
</reference>
<reference key="8">
    <citation type="journal article" date="2005" name="Mol. Cell. Biol.">
        <title>Replication protein A-directed unloading of PCNA by the Ctf18 cohesion establishment complex.</title>
        <authorList>
            <person name="Bylund G.O."/>
            <person name="Burgers P.M."/>
        </authorList>
    </citation>
    <scope>FUNCTION</scope>
    <scope>IDENTIFICATION IN THE CTF18-RFC COMPLEX</scope>
    <scope>FUNCTION OF THE CTF18-RFC COMPLEX</scope>
    <scope>MUTAGENESIS OF LYS-189</scope>
</reference>
<reference key="9">
    <citation type="journal article" date="2008" name="Mol. Cell. Proteomics">
        <title>A multidimensional chromatography technology for in-depth phosphoproteome analysis.</title>
        <authorList>
            <person name="Albuquerque C.P."/>
            <person name="Smolka M.B."/>
            <person name="Payne S.H."/>
            <person name="Bafna V."/>
            <person name="Eng J."/>
            <person name="Zhou H."/>
        </authorList>
    </citation>
    <scope>IDENTIFICATION BY MASS SPECTROMETRY [LARGE SCALE ANALYSIS]</scope>
</reference>
<reference key="10">
    <citation type="journal article" date="2009" name="Science">
        <title>Global analysis of Cdk1 substrate phosphorylation sites provides insights into evolution.</title>
        <authorList>
            <person name="Holt L.J."/>
            <person name="Tuch B.B."/>
            <person name="Villen J."/>
            <person name="Johnson A.D."/>
            <person name="Gygi S.P."/>
            <person name="Morgan D.O."/>
        </authorList>
    </citation>
    <scope>IDENTIFICATION BY MASS SPECTROMETRY [LARGE SCALE ANALYSIS]</scope>
</reference>
<sequence>MVDTAPYIGSLGRSSLFDTGDIEQAPGNNAIGINEEDIHAFVSSTGETVQLKKKPAKLATGNISLYTNPDTVWRSDDTYGININYLLDKIEASGDDRTNAQKTSPITGKIGSDTLWVEKWRPKKFLDLVGNEKTNRRMLGWLRQWTPAVFKEQLPKLPTEKEVSDMELDPLKRPPKKILLLHGPPGIGKTSVAHVIAKQSGFSVSEINASDERAGPMVKEKIYNLLFNHTFDTNPVCLVADEIDGSIESGFIRILVDIMQSDIKATNKLLYGQPDKKDKKRKKKRSKLLTRPIICICNNLYAPSLEKLKPFCEIIAVKRPSDTTLLERLNLICHKENMNIPIKAINDLIDLAQGDVRNCINNLQFLASNVDSRDSSASDKPACAKNTWASSNKDSPISWFKIVNQLFRKDPHRDIKEQFYELLNQVELNGNSDRILQGCFNIFPYVKYSDNGIRKPANISDWLFFHDLMYQSMYAHNGELLRYSALVPLVFFQTFGDIANKDDIRMKNSEYEQRELKRANSDIVSLIMRHISVQSPLMASFTDRKSLIFEILPYLDSMISSDFNKIRNLKLKQAIMEELVQLLKSFQLNLIQNRSEGFDVRGGLTIDPPIDEVVLLNPKHINEVQHKRANNLSSLLAKIEENRAKKRHIDQVTEDRLQSQEMHSKKVKTGLNSSSSTIDFFKNQYGLLKQTQELEETQKTIGSDETNQADDCNQTVKIWVKYNEGFSNAVRKNVTWNNLWE</sequence>
<name>CTF18_YEAST</name>
<proteinExistence type="evidence at protein level"/>